<name>Y1950_THEYD</name>
<protein>
    <recommendedName>
        <fullName evidence="1">UPF0102 protein THEYE_A1950</fullName>
    </recommendedName>
</protein>
<accession>B5YIA9</accession>
<sequence length="112" mass="13145">MARIELGKEGEKLAIDYLLTKGYKILEKNFRTPFGEIDIIAKDGNFIVIIEVKRRLSDKFGKPELSVNYTKQQKLKKLALYYISMLKKEYPVRFDVIAINDKKIEHIENAFF</sequence>
<organism>
    <name type="scientific">Thermodesulfovibrio yellowstonii (strain ATCC 51303 / DSM 11347 / YP87)</name>
    <dbReference type="NCBI Taxonomy" id="289376"/>
    <lineage>
        <taxon>Bacteria</taxon>
        <taxon>Pseudomonadati</taxon>
        <taxon>Nitrospirota</taxon>
        <taxon>Thermodesulfovibrionia</taxon>
        <taxon>Thermodesulfovibrionales</taxon>
        <taxon>Thermodesulfovibrionaceae</taxon>
        <taxon>Thermodesulfovibrio</taxon>
    </lineage>
</organism>
<dbReference type="EMBL" id="CP001147">
    <property type="protein sequence ID" value="ACI22018.1"/>
    <property type="molecule type" value="Genomic_DNA"/>
</dbReference>
<dbReference type="RefSeq" id="WP_012546712.1">
    <property type="nucleotide sequence ID" value="NC_011296.1"/>
</dbReference>
<dbReference type="RefSeq" id="YP_002249740.1">
    <property type="nucleotide sequence ID" value="NC_011296.1"/>
</dbReference>
<dbReference type="SMR" id="B5YIA9"/>
<dbReference type="FunCoup" id="B5YIA9">
    <property type="interactions" value="249"/>
</dbReference>
<dbReference type="STRING" id="289376.THEYE_A1950"/>
<dbReference type="EnsemblBacteria" id="ACI22018">
    <property type="protein sequence ID" value="ACI22018"/>
    <property type="gene ID" value="THEYE_A1950"/>
</dbReference>
<dbReference type="KEGG" id="tye:THEYE_A1950"/>
<dbReference type="PATRIC" id="fig|289376.4.peg.1905"/>
<dbReference type="eggNOG" id="COG0792">
    <property type="taxonomic scope" value="Bacteria"/>
</dbReference>
<dbReference type="HOGENOM" id="CLU_115353_3_1_0"/>
<dbReference type="InParanoid" id="B5YIA9"/>
<dbReference type="OrthoDB" id="9802516at2"/>
<dbReference type="Proteomes" id="UP000000718">
    <property type="component" value="Chromosome"/>
</dbReference>
<dbReference type="GO" id="GO:0003676">
    <property type="term" value="F:nucleic acid binding"/>
    <property type="evidence" value="ECO:0007669"/>
    <property type="project" value="InterPro"/>
</dbReference>
<dbReference type="CDD" id="cd20736">
    <property type="entry name" value="PoNe_Nuclease"/>
    <property type="match status" value="1"/>
</dbReference>
<dbReference type="Gene3D" id="3.40.1350.10">
    <property type="match status" value="1"/>
</dbReference>
<dbReference type="HAMAP" id="MF_00048">
    <property type="entry name" value="UPF0102"/>
    <property type="match status" value="1"/>
</dbReference>
<dbReference type="InterPro" id="IPR011335">
    <property type="entry name" value="Restrct_endonuc-II-like"/>
</dbReference>
<dbReference type="InterPro" id="IPR011856">
    <property type="entry name" value="tRNA_endonuc-like_dom_sf"/>
</dbReference>
<dbReference type="InterPro" id="IPR003509">
    <property type="entry name" value="UPF0102_YraN-like"/>
</dbReference>
<dbReference type="NCBIfam" id="NF009150">
    <property type="entry name" value="PRK12497.1-3"/>
    <property type="match status" value="1"/>
</dbReference>
<dbReference type="NCBIfam" id="TIGR00252">
    <property type="entry name" value="YraN family protein"/>
    <property type="match status" value="1"/>
</dbReference>
<dbReference type="PANTHER" id="PTHR34039">
    <property type="entry name" value="UPF0102 PROTEIN YRAN"/>
    <property type="match status" value="1"/>
</dbReference>
<dbReference type="PANTHER" id="PTHR34039:SF1">
    <property type="entry name" value="UPF0102 PROTEIN YRAN"/>
    <property type="match status" value="1"/>
</dbReference>
<dbReference type="Pfam" id="PF02021">
    <property type="entry name" value="UPF0102"/>
    <property type="match status" value="1"/>
</dbReference>
<dbReference type="SUPFAM" id="SSF52980">
    <property type="entry name" value="Restriction endonuclease-like"/>
    <property type="match status" value="1"/>
</dbReference>
<evidence type="ECO:0000255" key="1">
    <source>
        <dbReference type="HAMAP-Rule" id="MF_00048"/>
    </source>
</evidence>
<gene>
    <name type="ordered locus">THEYE_A1950</name>
</gene>
<proteinExistence type="inferred from homology"/>
<keyword id="KW-1185">Reference proteome</keyword>
<comment type="similarity">
    <text evidence="1">Belongs to the UPF0102 family.</text>
</comment>
<feature type="chain" id="PRO_1000091270" description="UPF0102 protein THEYE_A1950">
    <location>
        <begin position="1"/>
        <end position="112"/>
    </location>
</feature>
<reference key="1">
    <citation type="submission" date="2008-08" db="EMBL/GenBank/DDBJ databases">
        <title>The complete genome sequence of Thermodesulfovibrio yellowstonii strain ATCC 51303 / DSM 11347 / YP87.</title>
        <authorList>
            <person name="Dodson R.J."/>
            <person name="Durkin A.S."/>
            <person name="Wu M."/>
            <person name="Eisen J."/>
            <person name="Sutton G."/>
        </authorList>
    </citation>
    <scope>NUCLEOTIDE SEQUENCE [LARGE SCALE GENOMIC DNA]</scope>
    <source>
        <strain>ATCC 51303 / DSM 11347 / YP87</strain>
    </source>
</reference>